<evidence type="ECO:0000250" key="1"/>
<evidence type="ECO:0000255" key="2"/>
<evidence type="ECO:0000305" key="3"/>
<organism>
    <name type="scientific">Fowlpox virus (strain NVSL)</name>
    <name type="common">FPV</name>
    <dbReference type="NCBI Taxonomy" id="928301"/>
    <lineage>
        <taxon>Viruses</taxon>
        <taxon>Varidnaviria</taxon>
        <taxon>Bamfordvirae</taxon>
        <taxon>Nucleocytoviricota</taxon>
        <taxon>Pokkesviricetes</taxon>
        <taxon>Chitovirales</taxon>
        <taxon>Poxviridae</taxon>
        <taxon>Chordopoxvirinae</taxon>
        <taxon>Avipoxvirus</taxon>
        <taxon>Fowlpox virus</taxon>
    </lineage>
</organism>
<name>L5_FOWPN</name>
<sequence>MDRNINFSPVFIEPRFKHEFLLSPQRYFYILVFEVIVALIILNFFFKEEILYTFFPLAKPSKNSINSLLDRTMLKCEEDGSLMISRPSGIYSALSLDGSPVRISDCSLLLSSINGASSSTSPYSIFNRR</sequence>
<gene>
    <name type="ordered locus">FPV132</name>
    <name type="ORF">FP6</name>
</gene>
<comment type="function">
    <text evidence="1">Envelope protein part of the entry-fusion complex responsible for the virus membrane fusion with host cell membrane during virus entry. Also plays a role in cell-cell fusion (syncytium formation) (By similarity).</text>
</comment>
<comment type="subunit">
    <text evidence="1">Part of a stable entry-fusion complex (EFC) which is at least composed of proteins A16, A21, A28, G3, G9, H2, J5, and L5. Formation of the viral membrane is necessary for the assembly of the complex. Interacts with G3 (By similarity).</text>
</comment>
<comment type="subcellular location">
    <subcellularLocation>
        <location evidence="1">Virion membrane</location>
        <topology evidence="3">Single-pass type III membrane protein</topology>
    </subcellularLocation>
    <text evidence="1">Component of the mature virion (MV) membrane (By similarity). The mature virion is located in the cytoplasm of infected cells and is probably released by cell lysis.</text>
</comment>
<comment type="induction">
    <text>Expressed in the late phase of the viral replicative cycle.</text>
</comment>
<comment type="PTM">
    <text evidence="1">Most cysteines are linked by disulfide bonds. They are created by the viral disulfide bond formation pathway, a poxvirus-specific redox pathway that operates on the cytoplasmic side of the MV membranes (By similarity).</text>
</comment>
<comment type="similarity">
    <text evidence="3">Belongs to the chordopoxvirinae L5 family.</text>
</comment>
<proteinExistence type="evidence at transcript level"/>
<keyword id="KW-1015">Disulfide bond</keyword>
<keyword id="KW-1169">Fusion of virus membrane with host cell membrane</keyword>
<keyword id="KW-1168">Fusion of virus membrane with host membrane</keyword>
<keyword id="KW-0426">Late protein</keyword>
<keyword id="KW-0472">Membrane</keyword>
<keyword id="KW-1185">Reference proteome</keyword>
<keyword id="KW-0735">Signal-anchor</keyword>
<keyword id="KW-0812">Transmembrane</keyword>
<keyword id="KW-1133">Transmembrane helix</keyword>
<keyword id="KW-0261">Viral envelope protein</keyword>
<keyword id="KW-1162">Viral penetration into host cytoplasm</keyword>
<keyword id="KW-0946">Virion</keyword>
<keyword id="KW-1160">Virus entry into host cell</keyword>
<dbReference type="EMBL" id="D00320">
    <property type="protein sequence ID" value="BAA00229.1"/>
    <property type="molecule type" value="Genomic_DNA"/>
</dbReference>
<dbReference type="EMBL" id="M17418">
    <property type="protein sequence ID" value="AAA66420.1"/>
    <property type="molecule type" value="Genomic_DNA"/>
</dbReference>
<dbReference type="EMBL" id="AF198100">
    <property type="protein sequence ID" value="AAF44476.1"/>
    <property type="molecule type" value="Genomic_DNA"/>
</dbReference>
<dbReference type="PIR" id="JS0226">
    <property type="entry name" value="WMVZP6"/>
</dbReference>
<dbReference type="RefSeq" id="NP_039095.1">
    <property type="nucleotide sequence ID" value="NC_002188.1"/>
</dbReference>
<dbReference type="SMR" id="P15914"/>
<dbReference type="GeneID" id="1486680"/>
<dbReference type="KEGG" id="vg:1486680"/>
<dbReference type="Proteomes" id="UP000008597">
    <property type="component" value="Segment"/>
</dbReference>
<dbReference type="GO" id="GO:0016020">
    <property type="term" value="C:membrane"/>
    <property type="evidence" value="ECO:0007669"/>
    <property type="project" value="UniProtKB-KW"/>
</dbReference>
<dbReference type="GO" id="GO:0019031">
    <property type="term" value="C:viral envelope"/>
    <property type="evidence" value="ECO:0007669"/>
    <property type="project" value="UniProtKB-KW"/>
</dbReference>
<dbReference type="GO" id="GO:0055036">
    <property type="term" value="C:virion membrane"/>
    <property type="evidence" value="ECO:0007669"/>
    <property type="project" value="UniProtKB-SubCell"/>
</dbReference>
<dbReference type="GO" id="GO:0019064">
    <property type="term" value="P:fusion of virus membrane with host plasma membrane"/>
    <property type="evidence" value="ECO:0007669"/>
    <property type="project" value="UniProtKB-KW"/>
</dbReference>
<dbReference type="GO" id="GO:0046718">
    <property type="term" value="P:symbiont entry into host cell"/>
    <property type="evidence" value="ECO:0007669"/>
    <property type="project" value="UniProtKB-KW"/>
</dbReference>
<dbReference type="InterPro" id="IPR006956">
    <property type="entry name" value="Poxvirus_L5"/>
</dbReference>
<dbReference type="Pfam" id="PF04872">
    <property type="entry name" value="Pox_L5"/>
    <property type="match status" value="1"/>
</dbReference>
<protein>
    <recommendedName>
        <fullName>L5 homolog</fullName>
    </recommendedName>
    <alternativeName>
        <fullName>Protein FPV132</fullName>
    </alternativeName>
</protein>
<feature type="chain" id="PRO_0000099629" description="L5 homolog">
    <location>
        <begin position="1"/>
        <end position="129"/>
    </location>
</feature>
<feature type="transmembrane region" description="Helical; Signal-anchor for type III membrane protein" evidence="2">
    <location>
        <begin position="27"/>
        <end position="47"/>
    </location>
</feature>
<feature type="disulfide bond" evidence="1">
    <location>
        <begin position="76"/>
        <end position="106"/>
    </location>
</feature>
<reference key="1">
    <citation type="journal article" date="1988" name="J. Gen. Virol.">
        <title>Comparison of a conserved region in fowlpox virus and vaccinia virus genomes and the translocation of the fowlpox virus thymidine kinase gene.</title>
        <authorList>
            <person name="Binns M.M."/>
            <person name="Tomley F.M."/>
            <person name="Campbell J."/>
            <person name="Boursnell M.E.G."/>
        </authorList>
    </citation>
    <scope>NUCLEOTIDE SEQUENCE [GENOMIC DNA]</scope>
    <source>
        <strain>FP-9 / Isolate HP-444</strain>
    </source>
</reference>
<reference key="2">
    <citation type="journal article" date="1987" name="Virology">
        <title>Similar genetic organization between a region of fowlpox virus DNA and the vaccinia virus HindIII J fragment despite divergent location of the thymidine kinase gene.</title>
        <authorList>
            <person name="Drillien R."/>
            <person name="Spehner D."/>
            <person name="Villeval D."/>
            <person name="Lecocq J.-P."/>
        </authorList>
    </citation>
    <scope>NUCLEOTIDE SEQUENCE [GENOMIC DNA]</scope>
    <source>
        <strain>Salisbury</strain>
    </source>
</reference>
<reference key="3">
    <citation type="journal article" date="2000" name="J. Virol.">
        <title>The genome of fowlpox virus.</title>
        <authorList>
            <person name="Afonso C.L."/>
            <person name="Tulman E.R."/>
            <person name="Lu Z."/>
            <person name="Zsak L."/>
            <person name="Kutish G.F."/>
            <person name="Rock D.L."/>
        </authorList>
    </citation>
    <scope>NUCLEOTIDE SEQUENCE [LARGE SCALE GENOMIC DNA]</scope>
</reference>
<accession>P15914</accession>
<organismHost>
    <name type="scientific">Vertebrata</name>
    <dbReference type="NCBI Taxonomy" id="7742"/>
</organismHost>